<comment type="function">
    <text evidence="1">Together with LptE, is involved in the assembly of lipopolysaccharide (LPS) at the surface of the outer membrane.</text>
</comment>
<comment type="subunit">
    <text evidence="1">Component of the lipopolysaccharide transport and assembly complex. Interacts with LptE and LptA.</text>
</comment>
<comment type="subcellular location">
    <subcellularLocation>
        <location evidence="1">Cell outer membrane</location>
    </subcellularLocation>
</comment>
<comment type="similarity">
    <text evidence="1">Belongs to the LptD family.</text>
</comment>
<accession>Q5E862</accession>
<name>LPTD_ALIF1</name>
<evidence type="ECO:0000255" key="1">
    <source>
        <dbReference type="HAMAP-Rule" id="MF_01411"/>
    </source>
</evidence>
<dbReference type="EMBL" id="CP000020">
    <property type="protein sequence ID" value="AAW84784.1"/>
    <property type="molecule type" value="Genomic_DNA"/>
</dbReference>
<dbReference type="RefSeq" id="WP_011261100.1">
    <property type="nucleotide sequence ID" value="NC_006840.2"/>
</dbReference>
<dbReference type="RefSeq" id="YP_203672.1">
    <property type="nucleotide sequence ID" value="NC_006840.2"/>
</dbReference>
<dbReference type="SMR" id="Q5E862"/>
<dbReference type="STRING" id="312309.VF_0289"/>
<dbReference type="EnsemblBacteria" id="AAW84784">
    <property type="protein sequence ID" value="AAW84784"/>
    <property type="gene ID" value="VF_0289"/>
</dbReference>
<dbReference type="GeneID" id="54162909"/>
<dbReference type="KEGG" id="vfi:VF_0289"/>
<dbReference type="PATRIC" id="fig|312309.11.peg.283"/>
<dbReference type="eggNOG" id="COG1452">
    <property type="taxonomic scope" value="Bacteria"/>
</dbReference>
<dbReference type="HOGENOM" id="CLU_009039_0_0_6"/>
<dbReference type="OrthoDB" id="9760225at2"/>
<dbReference type="Proteomes" id="UP000000537">
    <property type="component" value="Chromosome I"/>
</dbReference>
<dbReference type="GO" id="GO:0009279">
    <property type="term" value="C:cell outer membrane"/>
    <property type="evidence" value="ECO:0007669"/>
    <property type="project" value="UniProtKB-SubCell"/>
</dbReference>
<dbReference type="GO" id="GO:1990351">
    <property type="term" value="C:transporter complex"/>
    <property type="evidence" value="ECO:0007669"/>
    <property type="project" value="TreeGrafter"/>
</dbReference>
<dbReference type="GO" id="GO:0043165">
    <property type="term" value="P:Gram-negative-bacterium-type cell outer membrane assembly"/>
    <property type="evidence" value="ECO:0007669"/>
    <property type="project" value="UniProtKB-UniRule"/>
</dbReference>
<dbReference type="GO" id="GO:0015920">
    <property type="term" value="P:lipopolysaccharide transport"/>
    <property type="evidence" value="ECO:0007669"/>
    <property type="project" value="InterPro"/>
</dbReference>
<dbReference type="Gene3D" id="2.60.450.10">
    <property type="entry name" value="Lipopolysaccharide (LPS) transport protein A like domain"/>
    <property type="match status" value="1"/>
</dbReference>
<dbReference type="HAMAP" id="MF_01411">
    <property type="entry name" value="LPS_assembly_LptD"/>
    <property type="match status" value="1"/>
</dbReference>
<dbReference type="InterPro" id="IPR020889">
    <property type="entry name" value="LipoPS_assembly_LptD"/>
</dbReference>
<dbReference type="InterPro" id="IPR050218">
    <property type="entry name" value="LptD"/>
</dbReference>
<dbReference type="InterPro" id="IPR007543">
    <property type="entry name" value="LptD_C"/>
</dbReference>
<dbReference type="InterPro" id="IPR005653">
    <property type="entry name" value="OstA-like_N"/>
</dbReference>
<dbReference type="NCBIfam" id="NF002997">
    <property type="entry name" value="PRK03761.1"/>
    <property type="match status" value="1"/>
</dbReference>
<dbReference type="PANTHER" id="PTHR30189">
    <property type="entry name" value="LPS-ASSEMBLY PROTEIN"/>
    <property type="match status" value="1"/>
</dbReference>
<dbReference type="PANTHER" id="PTHR30189:SF1">
    <property type="entry name" value="LPS-ASSEMBLY PROTEIN LPTD"/>
    <property type="match status" value="1"/>
</dbReference>
<dbReference type="Pfam" id="PF04453">
    <property type="entry name" value="LptD"/>
    <property type="match status" value="1"/>
</dbReference>
<dbReference type="Pfam" id="PF03968">
    <property type="entry name" value="LptD_N"/>
    <property type="match status" value="1"/>
</dbReference>
<sequence>MSFTSRSLLASFTGCLLYGTPAIADNGSEPVSPENGIVFPLQTDAVNSCEVPDKKSKEEEDQQPVLIQADSVEASNNSKAVYKGNVHIIKGRQEIKADSITLHQQENIAIAEGNVDYSSMEMRTTSDKVTTNLSTEDTTMVNTAYKMSCQPIRGQAGRVLKTGQEIYQLEDASFTTCPADDNSWRFKASDIELDQSDEWATFYNARFEVLDVPIFYLPYVTVPVGDTRKTGVLIPSIGLDSKNGFELSVPIYWNIAPNYDATTTINYMERRGTQLETEFRYLTELGKGTVDAEYLNEDDKFKDKGSRWGVSWDHSGIYQQHWKFDVEYSKVSDIDYFQDLNSSIGTRDEGQLQQSGEVSYRSQDWDMTMRVRDFQVLVEEQTPYRLMPQIEFNYYAPQFYSEFDFNLHSHISKFTTDDKAKPSATRVHLEPKLSLPLSGTWWSLIPETSLLYTYYQQDFDKQPVGPNGSLNLDHEVSRTIPEVRINGAIYLDSTHKFLGEYLQTLEPKIQYLYVPEVDQSNIYGGTGDGGYDSSKLQLDYYGLFRDRQYSGVDYIADANQFSVGATSRFYDDAYKERMNISFGQILYLNGSGTEQNNDDKNSSAWAMESDFNYDDYLFYHGGIQYDSNVSELQVANSTLEYRFSKGYIQANYRYVSKNYIESNVNFEDDLSLITQHGIYQAGLLSEYNLGRNWALKGQYFHDTKEDQMIEALVGVTYLSDCWSFGLTYSDQLIAPESAKTIGTYEPEYESNLMLSIAIRGLGNNTGITSGSANNALDYGRPFYLNN</sequence>
<gene>
    <name evidence="1" type="primary">lptD</name>
    <name type="synonym">imp</name>
    <name type="synonym">ostA</name>
    <name type="ordered locus">VF_0289</name>
</gene>
<keyword id="KW-0998">Cell outer membrane</keyword>
<keyword id="KW-0472">Membrane</keyword>
<keyword id="KW-1185">Reference proteome</keyword>
<keyword id="KW-0732">Signal</keyword>
<organism>
    <name type="scientific">Aliivibrio fischeri (strain ATCC 700601 / ES114)</name>
    <name type="common">Vibrio fischeri</name>
    <dbReference type="NCBI Taxonomy" id="312309"/>
    <lineage>
        <taxon>Bacteria</taxon>
        <taxon>Pseudomonadati</taxon>
        <taxon>Pseudomonadota</taxon>
        <taxon>Gammaproteobacteria</taxon>
        <taxon>Vibrionales</taxon>
        <taxon>Vibrionaceae</taxon>
        <taxon>Aliivibrio</taxon>
    </lineage>
</organism>
<protein>
    <recommendedName>
        <fullName evidence="1">LPS-assembly protein LptD</fullName>
    </recommendedName>
</protein>
<proteinExistence type="inferred from homology"/>
<feature type="signal peptide" evidence="1">
    <location>
        <begin position="1"/>
        <end position="24"/>
    </location>
</feature>
<feature type="chain" id="PRO_0000020292" description="LPS-assembly protein LptD">
    <location>
        <begin position="25"/>
        <end position="786"/>
    </location>
</feature>
<reference key="1">
    <citation type="journal article" date="2005" name="Proc. Natl. Acad. Sci. U.S.A.">
        <title>Complete genome sequence of Vibrio fischeri: a symbiotic bacterium with pathogenic congeners.</title>
        <authorList>
            <person name="Ruby E.G."/>
            <person name="Urbanowski M."/>
            <person name="Campbell J."/>
            <person name="Dunn A."/>
            <person name="Faini M."/>
            <person name="Gunsalus R."/>
            <person name="Lostroh P."/>
            <person name="Lupp C."/>
            <person name="McCann J."/>
            <person name="Millikan D."/>
            <person name="Schaefer A."/>
            <person name="Stabb E."/>
            <person name="Stevens A."/>
            <person name="Visick K."/>
            <person name="Whistler C."/>
            <person name="Greenberg E.P."/>
        </authorList>
    </citation>
    <scope>NUCLEOTIDE SEQUENCE [LARGE SCALE GENOMIC DNA]</scope>
    <source>
        <strain>ATCC 700601 / ES114</strain>
    </source>
</reference>